<sequence length="605" mass="67515">MPPSGTEVGMIRNFCIIAHIDHGKSTLADRLLEATQTLARNQMSTAQVLDDMDLERERGITIKSHAVQMIYKSSDGKEYTLNLIDTPGHVDFSYEVSRSLAACEGALLVVDATQGVEAQTIANLYLAIEAGLEIIPVINKIDLPSSDVEGVARQIIDLIGVNRDEILQVSAKAGIGIGELMEAIVQRIPAPADNRQLPLRALIFDSVFDAYRGAVAYIRIVDGVLKKDDKVRFFANGKEFYADEIGTMSLKRQPKNVLEAGNVGYLICSIKDVKDAKVGDTVTLVENPASERLAGYKDVKPMVFSGLYPVESNDFENLRESLEKLSLNDASLVYTPETSAALGFGFRCGFLGLLHMEIIQERLEREYGVNIITTVPNVEYRVVMTSGETVEVDNPSQMPESTKVNWIEEPYVSMQIITMSEYIGNIMKLGMDRRGEYKNTDYLDTSRVSMHFEFPLGEVVFDFHDKLKSISKGYASMDYEYIGYRRSDLVKLDVLLNGEPVDALSSIVHRSKSYEWGRKLCSKLKGIIPRQMYEVAIQAAIGSRVIARETISAMRKNVLAKCYGGDISRKRKLIEKQKEGKKRMKQVGRVEVPQEAFLAVLNIDE</sequence>
<evidence type="ECO:0000255" key="1">
    <source>
        <dbReference type="HAMAP-Rule" id="MF_00071"/>
    </source>
</evidence>
<accession>B3QPU3</accession>
<comment type="function">
    <text evidence="1">Required for accurate and efficient protein synthesis under certain stress conditions. May act as a fidelity factor of the translation reaction, by catalyzing a one-codon backward translocation of tRNAs on improperly translocated ribosomes. Back-translocation proceeds from a post-translocation (POST) complex to a pre-translocation (PRE) complex, thus giving elongation factor G a second chance to translocate the tRNAs correctly. Binds to ribosomes in a GTP-dependent manner.</text>
</comment>
<comment type="catalytic activity">
    <reaction evidence="1">
        <text>GTP + H2O = GDP + phosphate + H(+)</text>
        <dbReference type="Rhea" id="RHEA:19669"/>
        <dbReference type="ChEBI" id="CHEBI:15377"/>
        <dbReference type="ChEBI" id="CHEBI:15378"/>
        <dbReference type="ChEBI" id="CHEBI:37565"/>
        <dbReference type="ChEBI" id="CHEBI:43474"/>
        <dbReference type="ChEBI" id="CHEBI:58189"/>
        <dbReference type="EC" id="3.6.5.n1"/>
    </reaction>
</comment>
<comment type="subcellular location">
    <subcellularLocation>
        <location evidence="1">Cell inner membrane</location>
        <topology evidence="1">Peripheral membrane protein</topology>
        <orientation evidence="1">Cytoplasmic side</orientation>
    </subcellularLocation>
</comment>
<comment type="similarity">
    <text evidence="1">Belongs to the TRAFAC class translation factor GTPase superfamily. Classic translation factor GTPase family. LepA subfamily.</text>
</comment>
<keyword id="KW-0997">Cell inner membrane</keyword>
<keyword id="KW-1003">Cell membrane</keyword>
<keyword id="KW-0342">GTP-binding</keyword>
<keyword id="KW-0378">Hydrolase</keyword>
<keyword id="KW-0472">Membrane</keyword>
<keyword id="KW-0547">Nucleotide-binding</keyword>
<keyword id="KW-0648">Protein biosynthesis</keyword>
<protein>
    <recommendedName>
        <fullName evidence="1">Elongation factor 4</fullName>
        <shortName evidence="1">EF-4</shortName>
        <ecNumber evidence="1">3.6.5.n1</ecNumber>
    </recommendedName>
    <alternativeName>
        <fullName evidence="1">Ribosomal back-translocase LepA</fullName>
    </alternativeName>
</protein>
<reference key="1">
    <citation type="submission" date="2008-06" db="EMBL/GenBank/DDBJ databases">
        <title>Complete sequence of Chlorobaculum parvum NCIB 8327.</title>
        <authorList>
            <consortium name="US DOE Joint Genome Institute"/>
            <person name="Lucas S."/>
            <person name="Copeland A."/>
            <person name="Lapidus A."/>
            <person name="Glavina del Rio T."/>
            <person name="Dalin E."/>
            <person name="Tice H."/>
            <person name="Bruce D."/>
            <person name="Goodwin L."/>
            <person name="Pitluck S."/>
            <person name="Schmutz J."/>
            <person name="Larimer F."/>
            <person name="Land M."/>
            <person name="Hauser L."/>
            <person name="Kyrpides N."/>
            <person name="Mikhailova N."/>
            <person name="Zhao F."/>
            <person name="Li T."/>
            <person name="Liu Z."/>
            <person name="Overmann J."/>
            <person name="Bryant D.A."/>
            <person name="Richardson P."/>
        </authorList>
    </citation>
    <scope>NUCLEOTIDE SEQUENCE [LARGE SCALE GENOMIC DNA]</scope>
    <source>
        <strain>DSM 263 / NCIMB 8327</strain>
    </source>
</reference>
<proteinExistence type="inferred from homology"/>
<feature type="chain" id="PRO_1000092383" description="Elongation factor 4">
    <location>
        <begin position="1"/>
        <end position="605"/>
    </location>
</feature>
<feature type="domain" description="tr-type G">
    <location>
        <begin position="9"/>
        <end position="192"/>
    </location>
</feature>
<feature type="binding site" evidence="1">
    <location>
        <begin position="21"/>
        <end position="26"/>
    </location>
    <ligand>
        <name>GTP</name>
        <dbReference type="ChEBI" id="CHEBI:37565"/>
    </ligand>
</feature>
<feature type="binding site" evidence="1">
    <location>
        <begin position="139"/>
        <end position="142"/>
    </location>
    <ligand>
        <name>GTP</name>
        <dbReference type="ChEBI" id="CHEBI:37565"/>
    </ligand>
</feature>
<dbReference type="EC" id="3.6.5.n1" evidence="1"/>
<dbReference type="EMBL" id="CP001099">
    <property type="protein sequence ID" value="ACF11946.1"/>
    <property type="molecule type" value="Genomic_DNA"/>
</dbReference>
<dbReference type="RefSeq" id="WP_012502779.1">
    <property type="nucleotide sequence ID" value="NC_011027.1"/>
</dbReference>
<dbReference type="SMR" id="B3QPU3"/>
<dbReference type="STRING" id="517417.Cpar_1548"/>
<dbReference type="KEGG" id="cpc:Cpar_1548"/>
<dbReference type="eggNOG" id="COG0481">
    <property type="taxonomic scope" value="Bacteria"/>
</dbReference>
<dbReference type="HOGENOM" id="CLU_009995_3_3_10"/>
<dbReference type="OrthoDB" id="9801591at2"/>
<dbReference type="Proteomes" id="UP000008811">
    <property type="component" value="Chromosome"/>
</dbReference>
<dbReference type="GO" id="GO:0005886">
    <property type="term" value="C:plasma membrane"/>
    <property type="evidence" value="ECO:0007669"/>
    <property type="project" value="UniProtKB-SubCell"/>
</dbReference>
<dbReference type="GO" id="GO:0005525">
    <property type="term" value="F:GTP binding"/>
    <property type="evidence" value="ECO:0007669"/>
    <property type="project" value="UniProtKB-UniRule"/>
</dbReference>
<dbReference type="GO" id="GO:0003924">
    <property type="term" value="F:GTPase activity"/>
    <property type="evidence" value="ECO:0007669"/>
    <property type="project" value="UniProtKB-UniRule"/>
</dbReference>
<dbReference type="GO" id="GO:0043022">
    <property type="term" value="F:ribosome binding"/>
    <property type="evidence" value="ECO:0007669"/>
    <property type="project" value="UniProtKB-UniRule"/>
</dbReference>
<dbReference type="GO" id="GO:0003746">
    <property type="term" value="F:translation elongation factor activity"/>
    <property type="evidence" value="ECO:0007669"/>
    <property type="project" value="UniProtKB-UniRule"/>
</dbReference>
<dbReference type="GO" id="GO:0045727">
    <property type="term" value="P:positive regulation of translation"/>
    <property type="evidence" value="ECO:0007669"/>
    <property type="project" value="UniProtKB-UniRule"/>
</dbReference>
<dbReference type="CDD" id="cd03699">
    <property type="entry name" value="EF4_II"/>
    <property type="match status" value="1"/>
</dbReference>
<dbReference type="CDD" id="cd16260">
    <property type="entry name" value="EF4_III"/>
    <property type="match status" value="1"/>
</dbReference>
<dbReference type="CDD" id="cd01890">
    <property type="entry name" value="LepA"/>
    <property type="match status" value="1"/>
</dbReference>
<dbReference type="CDD" id="cd03709">
    <property type="entry name" value="lepA_C"/>
    <property type="match status" value="1"/>
</dbReference>
<dbReference type="FunFam" id="3.40.50.300:FF:000078">
    <property type="entry name" value="Elongation factor 4"/>
    <property type="match status" value="1"/>
</dbReference>
<dbReference type="FunFam" id="2.40.30.10:FF:000015">
    <property type="entry name" value="Translation factor GUF1, mitochondrial"/>
    <property type="match status" value="1"/>
</dbReference>
<dbReference type="FunFam" id="3.30.70.240:FF:000007">
    <property type="entry name" value="Translation factor GUF1, mitochondrial"/>
    <property type="match status" value="1"/>
</dbReference>
<dbReference type="FunFam" id="3.30.70.2570:FF:000001">
    <property type="entry name" value="Translation factor GUF1, mitochondrial"/>
    <property type="match status" value="1"/>
</dbReference>
<dbReference type="FunFam" id="3.30.70.870:FF:000004">
    <property type="entry name" value="Translation factor GUF1, mitochondrial"/>
    <property type="match status" value="1"/>
</dbReference>
<dbReference type="Gene3D" id="3.30.70.240">
    <property type="match status" value="1"/>
</dbReference>
<dbReference type="Gene3D" id="3.30.70.2570">
    <property type="entry name" value="Elongation factor 4, C-terminal domain"/>
    <property type="match status" value="1"/>
</dbReference>
<dbReference type="Gene3D" id="3.30.70.870">
    <property type="entry name" value="Elongation Factor G (Translational Gtpase), domain 3"/>
    <property type="match status" value="1"/>
</dbReference>
<dbReference type="Gene3D" id="3.40.50.300">
    <property type="entry name" value="P-loop containing nucleotide triphosphate hydrolases"/>
    <property type="match status" value="1"/>
</dbReference>
<dbReference type="Gene3D" id="2.40.30.10">
    <property type="entry name" value="Translation factors"/>
    <property type="match status" value="1"/>
</dbReference>
<dbReference type="HAMAP" id="MF_00071">
    <property type="entry name" value="LepA"/>
    <property type="match status" value="1"/>
</dbReference>
<dbReference type="InterPro" id="IPR006297">
    <property type="entry name" value="EF-4"/>
</dbReference>
<dbReference type="InterPro" id="IPR035647">
    <property type="entry name" value="EFG_III/V"/>
</dbReference>
<dbReference type="InterPro" id="IPR000640">
    <property type="entry name" value="EFG_V-like"/>
</dbReference>
<dbReference type="InterPro" id="IPR004161">
    <property type="entry name" value="EFTu-like_2"/>
</dbReference>
<dbReference type="InterPro" id="IPR038363">
    <property type="entry name" value="LepA_C_sf"/>
</dbReference>
<dbReference type="InterPro" id="IPR013842">
    <property type="entry name" value="LepA_CTD"/>
</dbReference>
<dbReference type="InterPro" id="IPR035654">
    <property type="entry name" value="LepA_IV"/>
</dbReference>
<dbReference type="InterPro" id="IPR027417">
    <property type="entry name" value="P-loop_NTPase"/>
</dbReference>
<dbReference type="InterPro" id="IPR005225">
    <property type="entry name" value="Small_GTP-bd"/>
</dbReference>
<dbReference type="InterPro" id="IPR000795">
    <property type="entry name" value="T_Tr_GTP-bd_dom"/>
</dbReference>
<dbReference type="InterPro" id="IPR009000">
    <property type="entry name" value="Transl_B-barrel_sf"/>
</dbReference>
<dbReference type="NCBIfam" id="TIGR01393">
    <property type="entry name" value="lepA"/>
    <property type="match status" value="1"/>
</dbReference>
<dbReference type="NCBIfam" id="TIGR00231">
    <property type="entry name" value="small_GTP"/>
    <property type="match status" value="1"/>
</dbReference>
<dbReference type="PANTHER" id="PTHR43512:SF4">
    <property type="entry name" value="TRANSLATION FACTOR GUF1 HOMOLOG, CHLOROPLASTIC"/>
    <property type="match status" value="1"/>
</dbReference>
<dbReference type="PANTHER" id="PTHR43512">
    <property type="entry name" value="TRANSLATION FACTOR GUF1-RELATED"/>
    <property type="match status" value="1"/>
</dbReference>
<dbReference type="Pfam" id="PF00679">
    <property type="entry name" value="EFG_C"/>
    <property type="match status" value="1"/>
</dbReference>
<dbReference type="Pfam" id="PF00009">
    <property type="entry name" value="GTP_EFTU"/>
    <property type="match status" value="1"/>
</dbReference>
<dbReference type="Pfam" id="PF03144">
    <property type="entry name" value="GTP_EFTU_D2"/>
    <property type="match status" value="1"/>
</dbReference>
<dbReference type="Pfam" id="PF06421">
    <property type="entry name" value="LepA_C"/>
    <property type="match status" value="1"/>
</dbReference>
<dbReference type="PRINTS" id="PR00315">
    <property type="entry name" value="ELONGATNFCT"/>
</dbReference>
<dbReference type="SUPFAM" id="SSF54980">
    <property type="entry name" value="EF-G C-terminal domain-like"/>
    <property type="match status" value="2"/>
</dbReference>
<dbReference type="SUPFAM" id="SSF52540">
    <property type="entry name" value="P-loop containing nucleoside triphosphate hydrolases"/>
    <property type="match status" value="1"/>
</dbReference>
<dbReference type="SUPFAM" id="SSF50447">
    <property type="entry name" value="Translation proteins"/>
    <property type="match status" value="1"/>
</dbReference>
<dbReference type="PROSITE" id="PS51722">
    <property type="entry name" value="G_TR_2"/>
    <property type="match status" value="1"/>
</dbReference>
<organism>
    <name type="scientific">Chlorobaculum parvum (strain DSM 263 / NCIMB 8327)</name>
    <name type="common">Chlorobium vibrioforme subsp. thiosulfatophilum</name>
    <dbReference type="NCBI Taxonomy" id="517417"/>
    <lineage>
        <taxon>Bacteria</taxon>
        <taxon>Pseudomonadati</taxon>
        <taxon>Chlorobiota</taxon>
        <taxon>Chlorobiia</taxon>
        <taxon>Chlorobiales</taxon>
        <taxon>Chlorobiaceae</taxon>
        <taxon>Chlorobaculum</taxon>
    </lineage>
</organism>
<gene>
    <name evidence="1" type="primary">lepA</name>
    <name type="ordered locus">Cpar_1548</name>
</gene>
<name>LEPA_CHLP8</name>